<proteinExistence type="inferred from homology"/>
<protein>
    <recommendedName>
        <fullName evidence="1">RNA pyrophosphohydrolase</fullName>
        <ecNumber evidence="1">3.6.1.-</ecNumber>
    </recommendedName>
    <alternativeName>
        <fullName evidence="1">(Di)nucleoside polyphosphate hydrolase</fullName>
    </alternativeName>
</protein>
<organism>
    <name type="scientific">Bartonella henselae (strain ATCC 49882 / DSM 28221 / CCUG 30454 / Houston 1)</name>
    <name type="common">Rochalimaea henselae</name>
    <dbReference type="NCBI Taxonomy" id="283166"/>
    <lineage>
        <taxon>Bacteria</taxon>
        <taxon>Pseudomonadati</taxon>
        <taxon>Pseudomonadota</taxon>
        <taxon>Alphaproteobacteria</taxon>
        <taxon>Hyphomicrobiales</taxon>
        <taxon>Bartonellaceae</taxon>
        <taxon>Bartonella</taxon>
    </lineage>
</organism>
<comment type="function">
    <text evidence="1">Accelerates the degradation of transcripts by removing pyrophosphate from the 5'-end of triphosphorylated RNA, leading to a more labile monophosphorylated state that can stimulate subsequent ribonuclease cleavage.</text>
</comment>
<comment type="cofactor">
    <cofactor evidence="1">
        <name>a divalent metal cation</name>
        <dbReference type="ChEBI" id="CHEBI:60240"/>
    </cofactor>
</comment>
<comment type="similarity">
    <text evidence="1">Belongs to the Nudix hydrolase family. RppH subfamily.</text>
</comment>
<gene>
    <name evidence="1" type="primary">rppH</name>
    <name evidence="1" type="synonym">nudH</name>
    <name type="ordered locus">BH01640</name>
</gene>
<reference key="1">
    <citation type="journal article" date="2004" name="Proc. Natl. Acad. Sci. U.S.A.">
        <title>The louse-borne human pathogen Bartonella quintana is a genomic derivative of the zoonotic agent Bartonella henselae.</title>
        <authorList>
            <person name="Alsmark U.C.M."/>
            <person name="Frank A.C."/>
            <person name="Karlberg E.O."/>
            <person name="Legault B.-A."/>
            <person name="Ardell D.H."/>
            <person name="Canbaeck B."/>
            <person name="Eriksson A.-S."/>
            <person name="Naeslund A.K."/>
            <person name="Handley S.A."/>
            <person name="Huvet M."/>
            <person name="La Scola B."/>
            <person name="Holmberg M."/>
            <person name="Andersson S.G.E."/>
        </authorList>
    </citation>
    <scope>NUCLEOTIDE SEQUENCE [LARGE SCALE GENOMIC DNA]</scope>
    <source>
        <strain>ATCC 49882 / DSM 28221 / CCUG 30454 / Houston 1</strain>
    </source>
</reference>
<evidence type="ECO:0000255" key="1">
    <source>
        <dbReference type="HAMAP-Rule" id="MF_00298"/>
    </source>
</evidence>
<keyword id="KW-0378">Hydrolase</keyword>
<name>RPPH_BARHE</name>
<dbReference type="EC" id="3.6.1.-" evidence="1"/>
<dbReference type="EMBL" id="BX897699">
    <property type="protein sequence ID" value="CAF26976.1"/>
    <property type="molecule type" value="Genomic_DNA"/>
</dbReference>
<dbReference type="RefSeq" id="WP_011180117.1">
    <property type="nucleotide sequence ID" value="NZ_LRIJ02000001.1"/>
</dbReference>
<dbReference type="SMR" id="Q6G4Y4"/>
<dbReference type="PaxDb" id="283166-BH01640"/>
<dbReference type="EnsemblBacteria" id="CAF26976">
    <property type="protein sequence ID" value="CAF26976"/>
    <property type="gene ID" value="BH01640"/>
</dbReference>
<dbReference type="KEGG" id="bhe:BH01640"/>
<dbReference type="eggNOG" id="COG0494">
    <property type="taxonomic scope" value="Bacteria"/>
</dbReference>
<dbReference type="OrthoDB" id="9816040at2"/>
<dbReference type="Proteomes" id="UP000000421">
    <property type="component" value="Chromosome"/>
</dbReference>
<dbReference type="GO" id="GO:0034432">
    <property type="term" value="F:bis(5'-adenosyl)-pentaphosphatase activity"/>
    <property type="evidence" value="ECO:0007669"/>
    <property type="project" value="TreeGrafter"/>
</dbReference>
<dbReference type="GO" id="GO:0008893">
    <property type="term" value="F:guanosine-3',5'-bis(diphosphate) 3'-diphosphatase activity"/>
    <property type="evidence" value="ECO:0007669"/>
    <property type="project" value="TreeGrafter"/>
</dbReference>
<dbReference type="GO" id="GO:0006753">
    <property type="term" value="P:nucleoside phosphate metabolic process"/>
    <property type="evidence" value="ECO:0007669"/>
    <property type="project" value="TreeGrafter"/>
</dbReference>
<dbReference type="GO" id="GO:0019693">
    <property type="term" value="P:ribose phosphate metabolic process"/>
    <property type="evidence" value="ECO:0007669"/>
    <property type="project" value="TreeGrafter"/>
</dbReference>
<dbReference type="CDD" id="cd03671">
    <property type="entry name" value="NUDIX_Ap4A_hydrolase_plant_like"/>
    <property type="match status" value="1"/>
</dbReference>
<dbReference type="Gene3D" id="3.90.79.10">
    <property type="entry name" value="Nucleoside Triphosphate Pyrophosphohydrolase"/>
    <property type="match status" value="1"/>
</dbReference>
<dbReference type="HAMAP" id="MF_00298">
    <property type="entry name" value="Nudix_RppH"/>
    <property type="match status" value="1"/>
</dbReference>
<dbReference type="InterPro" id="IPR020476">
    <property type="entry name" value="Nudix_hydrolase"/>
</dbReference>
<dbReference type="InterPro" id="IPR015797">
    <property type="entry name" value="NUDIX_hydrolase-like_dom_sf"/>
</dbReference>
<dbReference type="InterPro" id="IPR020084">
    <property type="entry name" value="NUDIX_hydrolase_CS"/>
</dbReference>
<dbReference type="InterPro" id="IPR000086">
    <property type="entry name" value="NUDIX_hydrolase_dom"/>
</dbReference>
<dbReference type="InterPro" id="IPR022927">
    <property type="entry name" value="RppH"/>
</dbReference>
<dbReference type="NCBIfam" id="NF001938">
    <property type="entry name" value="PRK00714.1-5"/>
    <property type="match status" value="1"/>
</dbReference>
<dbReference type="PANTHER" id="PTHR11839:SF22">
    <property type="entry name" value="NUDIX HYDROLASE 26, CHLOROPLASTIC"/>
    <property type="match status" value="1"/>
</dbReference>
<dbReference type="PANTHER" id="PTHR11839">
    <property type="entry name" value="UDP/ADP-SUGAR PYROPHOSPHATASE"/>
    <property type="match status" value="1"/>
</dbReference>
<dbReference type="Pfam" id="PF00293">
    <property type="entry name" value="NUDIX"/>
    <property type="match status" value="1"/>
</dbReference>
<dbReference type="PRINTS" id="PR00502">
    <property type="entry name" value="NUDIXFAMILY"/>
</dbReference>
<dbReference type="SUPFAM" id="SSF55811">
    <property type="entry name" value="Nudix"/>
    <property type="match status" value="1"/>
</dbReference>
<dbReference type="PROSITE" id="PS51462">
    <property type="entry name" value="NUDIX"/>
    <property type="match status" value="1"/>
</dbReference>
<dbReference type="PROSITE" id="PS00893">
    <property type="entry name" value="NUDIX_BOX"/>
    <property type="match status" value="1"/>
</dbReference>
<feature type="chain" id="PRO_0000231896" description="RNA pyrophosphohydrolase">
    <location>
        <begin position="1"/>
        <end position="173"/>
    </location>
</feature>
<feature type="domain" description="Nudix hydrolase" evidence="1">
    <location>
        <begin position="11"/>
        <end position="164"/>
    </location>
</feature>
<feature type="short sequence motif" description="Nudix box">
    <location>
        <begin position="52"/>
        <end position="73"/>
    </location>
</feature>
<accession>Q6G4Y4</accession>
<sequence length="173" mass="20343">MDAVVNLTTLPYRRSVGILVFNHEGKVWVGRRLMVCIHEDTKIYHRWQLPQGGIDENEEPLDAARRELYEETGIRSIELIKEAKYWFHYDFPQEIVGSVLGSKYRGQIQKWFAFQFTGELSEIKINPPPDGHKAEFDQWKWVDLETLPSIVISFKKHVYMKIVNEFRGSFKGL</sequence>